<dbReference type="EMBL" id="AL123456">
    <property type="protein sequence ID" value="CCP42761.1"/>
    <property type="molecule type" value="Genomic_DNA"/>
</dbReference>
<dbReference type="PIR" id="E70702">
    <property type="entry name" value="E70702"/>
</dbReference>
<dbReference type="RefSeq" id="NP_214553.1">
    <property type="nucleotide sequence ID" value="NC_000962.3"/>
</dbReference>
<dbReference type="RefSeq" id="WP_003907179.1">
    <property type="nucleotide sequence ID" value="NZ_NVQJ01000005.1"/>
</dbReference>
<dbReference type="STRING" id="83332.Rv0039c"/>
<dbReference type="PaxDb" id="83332-Rv0039c"/>
<dbReference type="DNASU" id="887038"/>
<dbReference type="GeneID" id="887038"/>
<dbReference type="KEGG" id="mtu:Rv0039c"/>
<dbReference type="KEGG" id="mtv:RVBD_0039c"/>
<dbReference type="TubercuList" id="Rv0039c"/>
<dbReference type="eggNOG" id="ENOG5032A3P">
    <property type="taxonomic scope" value="Bacteria"/>
</dbReference>
<dbReference type="InParanoid" id="P9WM89"/>
<dbReference type="OrthoDB" id="4753342at2"/>
<dbReference type="Proteomes" id="UP000001584">
    <property type="component" value="Chromosome"/>
</dbReference>
<dbReference type="GO" id="GO:0005886">
    <property type="term" value="C:plasma membrane"/>
    <property type="evidence" value="ECO:0007669"/>
    <property type="project" value="UniProtKB-SubCell"/>
</dbReference>
<protein>
    <recommendedName>
        <fullName>Uncharacterized protein Rv0039c</fullName>
    </recommendedName>
</protein>
<accession>P9WM89</accession>
<accession>L0T5I0</accession>
<accession>P71609</accession>
<accession>P71696</accession>
<organism>
    <name type="scientific">Mycobacterium tuberculosis (strain ATCC 25618 / H37Rv)</name>
    <dbReference type="NCBI Taxonomy" id="83332"/>
    <lineage>
        <taxon>Bacteria</taxon>
        <taxon>Bacillati</taxon>
        <taxon>Actinomycetota</taxon>
        <taxon>Actinomycetes</taxon>
        <taxon>Mycobacteriales</taxon>
        <taxon>Mycobacteriaceae</taxon>
        <taxon>Mycobacterium</taxon>
        <taxon>Mycobacterium tuberculosis complex</taxon>
    </lineage>
</organism>
<feature type="chain" id="PRO_0000103656" description="Uncharacterized protein Rv0039c">
    <location>
        <begin position="1"/>
        <end position="115"/>
    </location>
</feature>
<feature type="transmembrane region" description="Helical" evidence="1">
    <location>
        <begin position="1"/>
        <end position="21"/>
    </location>
</feature>
<feature type="transmembrane region" description="Helical" evidence="1">
    <location>
        <begin position="33"/>
        <end position="53"/>
    </location>
</feature>
<feature type="transmembrane region" description="Helical" evidence="1">
    <location>
        <begin position="54"/>
        <end position="74"/>
    </location>
</feature>
<keyword id="KW-1003">Cell membrane</keyword>
<keyword id="KW-0472">Membrane</keyword>
<keyword id="KW-1185">Reference proteome</keyword>
<keyword id="KW-0812">Transmembrane</keyword>
<keyword id="KW-1133">Transmembrane helix</keyword>
<proteinExistence type="predicted"/>
<name>Y039_MYCTU</name>
<gene>
    <name type="ordered locus">Rv0039c</name>
    <name type="ORF">MTCY10H4.39c</name>
    <name type="ORF">MTCY21D4.02c</name>
</gene>
<evidence type="ECO:0000255" key="1"/>
<evidence type="ECO:0000305" key="2"/>
<sequence length="115" mass="11292">MFLAGVLCMCAAAASALFGSWSLCHTPTADPTALALRAMAPTQLAAAVMLAAGGVVAVAAPGHTALMVVIVCIAGAVGTLAAGSWQSAQYALRRETASPTANCVGSCAVCTQACH</sequence>
<reference key="1">
    <citation type="journal article" date="1998" name="Nature">
        <title>Deciphering the biology of Mycobacterium tuberculosis from the complete genome sequence.</title>
        <authorList>
            <person name="Cole S.T."/>
            <person name="Brosch R."/>
            <person name="Parkhill J."/>
            <person name="Garnier T."/>
            <person name="Churcher C.M."/>
            <person name="Harris D.E."/>
            <person name="Gordon S.V."/>
            <person name="Eiglmeier K."/>
            <person name="Gas S."/>
            <person name="Barry C.E. III"/>
            <person name="Tekaia F."/>
            <person name="Badcock K."/>
            <person name="Basham D."/>
            <person name="Brown D."/>
            <person name="Chillingworth T."/>
            <person name="Connor R."/>
            <person name="Davies R.M."/>
            <person name="Devlin K."/>
            <person name="Feltwell T."/>
            <person name="Gentles S."/>
            <person name="Hamlin N."/>
            <person name="Holroyd S."/>
            <person name="Hornsby T."/>
            <person name="Jagels K."/>
            <person name="Krogh A."/>
            <person name="McLean J."/>
            <person name="Moule S."/>
            <person name="Murphy L.D."/>
            <person name="Oliver S."/>
            <person name="Osborne J."/>
            <person name="Quail M.A."/>
            <person name="Rajandream M.A."/>
            <person name="Rogers J."/>
            <person name="Rutter S."/>
            <person name="Seeger K."/>
            <person name="Skelton S."/>
            <person name="Squares S."/>
            <person name="Squares R."/>
            <person name="Sulston J.E."/>
            <person name="Taylor K."/>
            <person name="Whitehead S."/>
            <person name="Barrell B.G."/>
        </authorList>
    </citation>
    <scope>NUCLEOTIDE SEQUENCE [LARGE SCALE GENOMIC DNA]</scope>
    <source>
        <strain>ATCC 25618 / H37Rv</strain>
    </source>
</reference>
<comment type="subcellular location">
    <subcellularLocation>
        <location evidence="2">Cell membrane</location>
        <topology evidence="2">Multi-pass membrane protein</topology>
    </subcellularLocation>
</comment>
<comment type="similarity">
    <text evidence="2">To M.leprae ML0030.</text>
</comment>